<accession>A9HJ49</accession>
<accession>B5ZJZ7</accession>
<dbReference type="EC" id="6.1.1.21" evidence="1"/>
<dbReference type="EMBL" id="AM889285">
    <property type="protein sequence ID" value="CAP55857.1"/>
    <property type="molecule type" value="Genomic_DNA"/>
</dbReference>
<dbReference type="EMBL" id="CP001189">
    <property type="protein sequence ID" value="ACI49936.1"/>
    <property type="molecule type" value="Genomic_DNA"/>
</dbReference>
<dbReference type="RefSeq" id="WP_012225532.1">
    <property type="nucleotide sequence ID" value="NC_010125.1"/>
</dbReference>
<dbReference type="SMR" id="A9HJ49"/>
<dbReference type="STRING" id="272568.GDI1914"/>
<dbReference type="KEGG" id="gdi:GDI1914"/>
<dbReference type="KEGG" id="gdj:Gdia_0136"/>
<dbReference type="eggNOG" id="COG0124">
    <property type="taxonomic scope" value="Bacteria"/>
</dbReference>
<dbReference type="HOGENOM" id="CLU_025113_1_0_5"/>
<dbReference type="OrthoDB" id="9800814at2"/>
<dbReference type="Proteomes" id="UP000001176">
    <property type="component" value="Chromosome"/>
</dbReference>
<dbReference type="GO" id="GO:0005737">
    <property type="term" value="C:cytoplasm"/>
    <property type="evidence" value="ECO:0007669"/>
    <property type="project" value="UniProtKB-SubCell"/>
</dbReference>
<dbReference type="GO" id="GO:0005524">
    <property type="term" value="F:ATP binding"/>
    <property type="evidence" value="ECO:0007669"/>
    <property type="project" value="UniProtKB-UniRule"/>
</dbReference>
<dbReference type="GO" id="GO:0004821">
    <property type="term" value="F:histidine-tRNA ligase activity"/>
    <property type="evidence" value="ECO:0007669"/>
    <property type="project" value="UniProtKB-UniRule"/>
</dbReference>
<dbReference type="GO" id="GO:0006427">
    <property type="term" value="P:histidyl-tRNA aminoacylation"/>
    <property type="evidence" value="ECO:0007669"/>
    <property type="project" value="UniProtKB-UniRule"/>
</dbReference>
<dbReference type="CDD" id="cd00773">
    <property type="entry name" value="HisRS-like_core"/>
    <property type="match status" value="1"/>
</dbReference>
<dbReference type="CDD" id="cd00859">
    <property type="entry name" value="HisRS_anticodon"/>
    <property type="match status" value="1"/>
</dbReference>
<dbReference type="Gene3D" id="3.40.50.800">
    <property type="entry name" value="Anticodon-binding domain"/>
    <property type="match status" value="1"/>
</dbReference>
<dbReference type="Gene3D" id="3.30.930.10">
    <property type="entry name" value="Bira Bifunctional Protein, Domain 2"/>
    <property type="match status" value="1"/>
</dbReference>
<dbReference type="HAMAP" id="MF_00127">
    <property type="entry name" value="His_tRNA_synth"/>
    <property type="match status" value="1"/>
</dbReference>
<dbReference type="InterPro" id="IPR006195">
    <property type="entry name" value="aa-tRNA-synth_II"/>
</dbReference>
<dbReference type="InterPro" id="IPR045864">
    <property type="entry name" value="aa-tRNA-synth_II/BPL/LPL"/>
</dbReference>
<dbReference type="InterPro" id="IPR004154">
    <property type="entry name" value="Anticodon-bd"/>
</dbReference>
<dbReference type="InterPro" id="IPR036621">
    <property type="entry name" value="Anticodon-bd_dom_sf"/>
</dbReference>
<dbReference type="InterPro" id="IPR015807">
    <property type="entry name" value="His-tRNA-ligase"/>
</dbReference>
<dbReference type="InterPro" id="IPR041715">
    <property type="entry name" value="HisRS-like_core"/>
</dbReference>
<dbReference type="InterPro" id="IPR004516">
    <property type="entry name" value="HisRS/HisZ"/>
</dbReference>
<dbReference type="InterPro" id="IPR033656">
    <property type="entry name" value="HisRS_anticodon"/>
</dbReference>
<dbReference type="NCBIfam" id="TIGR00442">
    <property type="entry name" value="hisS"/>
    <property type="match status" value="1"/>
</dbReference>
<dbReference type="PANTHER" id="PTHR43707:SF1">
    <property type="entry name" value="HISTIDINE--TRNA LIGASE, MITOCHONDRIAL-RELATED"/>
    <property type="match status" value="1"/>
</dbReference>
<dbReference type="PANTHER" id="PTHR43707">
    <property type="entry name" value="HISTIDYL-TRNA SYNTHETASE"/>
    <property type="match status" value="1"/>
</dbReference>
<dbReference type="Pfam" id="PF03129">
    <property type="entry name" value="HGTP_anticodon"/>
    <property type="match status" value="1"/>
</dbReference>
<dbReference type="Pfam" id="PF13393">
    <property type="entry name" value="tRNA-synt_His"/>
    <property type="match status" value="1"/>
</dbReference>
<dbReference type="PIRSF" id="PIRSF001549">
    <property type="entry name" value="His-tRNA_synth"/>
    <property type="match status" value="1"/>
</dbReference>
<dbReference type="SUPFAM" id="SSF52954">
    <property type="entry name" value="Class II aaRS ABD-related"/>
    <property type="match status" value="1"/>
</dbReference>
<dbReference type="SUPFAM" id="SSF55681">
    <property type="entry name" value="Class II aaRS and biotin synthetases"/>
    <property type="match status" value="1"/>
</dbReference>
<dbReference type="PROSITE" id="PS50862">
    <property type="entry name" value="AA_TRNA_LIGASE_II"/>
    <property type="match status" value="1"/>
</dbReference>
<name>SYH_GLUDA</name>
<proteinExistence type="inferred from homology"/>
<sequence length="415" mass="44657">MSSLQPVRGTHDLIGETQLRHAHVVETARRIAGLYGFDEWATPIFEDTRVFARSLGDTSDVVSKEMYSFEDRGGESLTLRPEGTAGVCRALVTNGLTQSLPQKVFYAGPMFRYERPQKGRYRQFHQIGAELIGAAEPLADAEAIAMGRDVLKALGIADETILDLNTLGDTESRAAWRTALIGYFTECRDQLSDDSRARLERNPLRILDSKAPQDRALVADAPRIGAFLTPEAVAFWDGLRSALDLMGVPFRENPGIVRGLDYYGHTAFEFVTERLGAQGTVLAGGRYDGLVAEMGGPRTPAIGWAGGIERLSMLLDATPAAPRPVAVVPMGEGAMGAAILLLQALRAGGVRAEIAYRGNTKKRLERANRIGATHAVLIGEDEVARGVAQVKALDDGSQAELALDAVTPYLAGLAG</sequence>
<reference key="1">
    <citation type="journal article" date="2009" name="BMC Genomics">
        <title>Complete genome sequence of the sugarcane nitrogen-fixing endophyte Gluconacetobacter diazotrophicus Pal5.</title>
        <authorList>
            <person name="Bertalan M."/>
            <person name="Albano R."/>
            <person name="de Padua V."/>
            <person name="Rouws L."/>
            <person name="Rojas C."/>
            <person name="Hemerly A."/>
            <person name="Teixeira K."/>
            <person name="Schwab S."/>
            <person name="Araujo J."/>
            <person name="Oliveira A."/>
            <person name="Franca L."/>
            <person name="Magalhaes V."/>
            <person name="Alqueres S."/>
            <person name="Cardoso A."/>
            <person name="Almeida W."/>
            <person name="Loureiro M.M."/>
            <person name="Nogueira E."/>
            <person name="Cidade D."/>
            <person name="Oliveira D."/>
            <person name="Simao T."/>
            <person name="Macedo J."/>
            <person name="Valadao A."/>
            <person name="Dreschsel M."/>
            <person name="Freitas F."/>
            <person name="Vidal M."/>
            <person name="Guedes H."/>
            <person name="Rodrigues E."/>
            <person name="Meneses C."/>
            <person name="Brioso P."/>
            <person name="Pozzer L."/>
            <person name="Figueiredo D."/>
            <person name="Montano H."/>
            <person name="Junior J."/>
            <person name="de Souza Filho G."/>
            <person name="Martin Quintana Flores V."/>
            <person name="Ferreira B."/>
            <person name="Branco A."/>
            <person name="Gonzalez P."/>
            <person name="Guillobel H."/>
            <person name="Lemos M."/>
            <person name="Seibel L."/>
            <person name="Macedo J."/>
            <person name="Alves-Ferreira M."/>
            <person name="Sachetto-Martins G."/>
            <person name="Coelho A."/>
            <person name="Santos E."/>
            <person name="Amaral G."/>
            <person name="Neves A."/>
            <person name="Pacheco A.B."/>
            <person name="Carvalho D."/>
            <person name="Lery L."/>
            <person name="Bisch P."/>
            <person name="Rossle S.C."/>
            <person name="Urmenyi T."/>
            <person name="Rael Pereira A."/>
            <person name="Silva R."/>
            <person name="Rondinelli E."/>
            <person name="von Kruger W."/>
            <person name="Martins O."/>
            <person name="Baldani J.I."/>
            <person name="Ferreira P.C."/>
        </authorList>
    </citation>
    <scope>NUCLEOTIDE SEQUENCE [LARGE SCALE GENOMIC DNA]</scope>
    <source>
        <strain>ATCC 49037 / DSM 5601 / CCUG 37298 / CIP 103539 / LMG 7603 / PAl5</strain>
    </source>
</reference>
<reference key="2">
    <citation type="journal article" date="2010" name="Stand. Genomic Sci.">
        <title>Two genome sequences of the same bacterial strain, Gluconacetobacter diazotrophicus PAl 5, suggest a new standard in genome sequence submission.</title>
        <authorList>
            <person name="Giongo A."/>
            <person name="Tyler H.L."/>
            <person name="Zipperer U.N."/>
            <person name="Triplett E.W."/>
        </authorList>
    </citation>
    <scope>NUCLEOTIDE SEQUENCE [LARGE SCALE GENOMIC DNA]</scope>
    <source>
        <strain>ATCC 49037 / DSM 5601 / CCUG 37298 / CIP 103539 / LMG 7603 / PAl5</strain>
    </source>
</reference>
<organism>
    <name type="scientific">Gluconacetobacter diazotrophicus (strain ATCC 49037 / DSM 5601 / CCUG 37298 / CIP 103539 / LMG 7603 / PAl5)</name>
    <dbReference type="NCBI Taxonomy" id="272568"/>
    <lineage>
        <taxon>Bacteria</taxon>
        <taxon>Pseudomonadati</taxon>
        <taxon>Pseudomonadota</taxon>
        <taxon>Alphaproteobacteria</taxon>
        <taxon>Acetobacterales</taxon>
        <taxon>Acetobacteraceae</taxon>
        <taxon>Gluconacetobacter</taxon>
    </lineage>
</organism>
<feature type="chain" id="PRO_1000076273" description="Histidine--tRNA ligase">
    <location>
        <begin position="1"/>
        <end position="415"/>
    </location>
</feature>
<gene>
    <name evidence="1" type="primary">hisS</name>
    <name type="ordered locus">GDI1914</name>
    <name type="ordered locus">Gdia_0136</name>
</gene>
<comment type="catalytic activity">
    <reaction evidence="1">
        <text>tRNA(His) + L-histidine + ATP = L-histidyl-tRNA(His) + AMP + diphosphate + H(+)</text>
        <dbReference type="Rhea" id="RHEA:17313"/>
        <dbReference type="Rhea" id="RHEA-COMP:9665"/>
        <dbReference type="Rhea" id="RHEA-COMP:9689"/>
        <dbReference type="ChEBI" id="CHEBI:15378"/>
        <dbReference type="ChEBI" id="CHEBI:30616"/>
        <dbReference type="ChEBI" id="CHEBI:33019"/>
        <dbReference type="ChEBI" id="CHEBI:57595"/>
        <dbReference type="ChEBI" id="CHEBI:78442"/>
        <dbReference type="ChEBI" id="CHEBI:78527"/>
        <dbReference type="ChEBI" id="CHEBI:456215"/>
        <dbReference type="EC" id="6.1.1.21"/>
    </reaction>
</comment>
<comment type="subunit">
    <text evidence="1">Homodimer.</text>
</comment>
<comment type="subcellular location">
    <subcellularLocation>
        <location evidence="1">Cytoplasm</location>
    </subcellularLocation>
</comment>
<comment type="similarity">
    <text evidence="1">Belongs to the class-II aminoacyl-tRNA synthetase family.</text>
</comment>
<evidence type="ECO:0000255" key="1">
    <source>
        <dbReference type="HAMAP-Rule" id="MF_00127"/>
    </source>
</evidence>
<protein>
    <recommendedName>
        <fullName evidence="1">Histidine--tRNA ligase</fullName>
        <ecNumber evidence="1">6.1.1.21</ecNumber>
    </recommendedName>
    <alternativeName>
        <fullName evidence="1">Histidyl-tRNA synthetase</fullName>
        <shortName evidence="1">HisRS</shortName>
    </alternativeName>
</protein>
<keyword id="KW-0030">Aminoacyl-tRNA synthetase</keyword>
<keyword id="KW-0067">ATP-binding</keyword>
<keyword id="KW-0963">Cytoplasm</keyword>
<keyword id="KW-0436">Ligase</keyword>
<keyword id="KW-0547">Nucleotide-binding</keyword>
<keyword id="KW-0648">Protein biosynthesis</keyword>
<keyword id="KW-1185">Reference proteome</keyword>